<reference key="1">
    <citation type="journal article" date="2002" name="Nature">
        <title>Comparison of the genomes of two Xanthomonas pathogens with differing host specificities.</title>
        <authorList>
            <person name="da Silva A.C.R."/>
            <person name="Ferro J.A."/>
            <person name="Reinach F.C."/>
            <person name="Farah C.S."/>
            <person name="Furlan L.R."/>
            <person name="Quaggio R.B."/>
            <person name="Monteiro-Vitorello C.B."/>
            <person name="Van Sluys M.A."/>
            <person name="Almeida N.F. Jr."/>
            <person name="Alves L.M.C."/>
            <person name="do Amaral A.M."/>
            <person name="Bertolini M.C."/>
            <person name="Camargo L.E.A."/>
            <person name="Camarotte G."/>
            <person name="Cannavan F."/>
            <person name="Cardozo J."/>
            <person name="Chambergo F."/>
            <person name="Ciapina L.P."/>
            <person name="Cicarelli R.M.B."/>
            <person name="Coutinho L.L."/>
            <person name="Cursino-Santos J.R."/>
            <person name="El-Dorry H."/>
            <person name="Faria J.B."/>
            <person name="Ferreira A.J.S."/>
            <person name="Ferreira R.C.C."/>
            <person name="Ferro M.I.T."/>
            <person name="Formighieri E.F."/>
            <person name="Franco M.C."/>
            <person name="Greggio C.C."/>
            <person name="Gruber A."/>
            <person name="Katsuyama A.M."/>
            <person name="Kishi L.T."/>
            <person name="Leite R.P."/>
            <person name="Lemos E.G.M."/>
            <person name="Lemos M.V.F."/>
            <person name="Locali E.C."/>
            <person name="Machado M.A."/>
            <person name="Madeira A.M.B.N."/>
            <person name="Martinez-Rossi N.M."/>
            <person name="Martins E.C."/>
            <person name="Meidanis J."/>
            <person name="Menck C.F.M."/>
            <person name="Miyaki C.Y."/>
            <person name="Moon D.H."/>
            <person name="Moreira L.M."/>
            <person name="Novo M.T.M."/>
            <person name="Okura V.K."/>
            <person name="Oliveira M.C."/>
            <person name="Oliveira V.R."/>
            <person name="Pereira H.A."/>
            <person name="Rossi A."/>
            <person name="Sena J.A.D."/>
            <person name="Silva C."/>
            <person name="de Souza R.F."/>
            <person name="Spinola L.A.F."/>
            <person name="Takita M.A."/>
            <person name="Tamura R.E."/>
            <person name="Teixeira E.C."/>
            <person name="Tezza R.I.D."/>
            <person name="Trindade dos Santos M."/>
            <person name="Truffi D."/>
            <person name="Tsai S.M."/>
            <person name="White F.F."/>
            <person name="Setubal J.C."/>
            <person name="Kitajima J.P."/>
        </authorList>
    </citation>
    <scope>NUCLEOTIDE SEQUENCE [LARGE SCALE GENOMIC DNA]</scope>
    <source>
        <strain>ATCC 33913 / DSM 3586 / NCPPB 528 / LMG 568 / P 25</strain>
    </source>
</reference>
<evidence type="ECO:0000255" key="1">
    <source>
        <dbReference type="HAMAP-Rule" id="MF_00518"/>
    </source>
</evidence>
<evidence type="ECO:0000305" key="2"/>
<sequence length="146" mass="15454">MLALIQRVTRASVAVDAQVVGQIGPGLLALIGIEPGDTAPQLRRLAERLLGYRVFSDEAGKMNRSLADTGGGLLLVSQFTLAADTKAGMRPSFSTAAPPEEAERAFNQLVAICREKHSGGVETGRFGAHMVVDLVNDGPVTFLLRP</sequence>
<organism>
    <name type="scientific">Xanthomonas campestris pv. campestris (strain ATCC 33913 / DSM 3586 / NCPPB 528 / LMG 568 / P 25)</name>
    <dbReference type="NCBI Taxonomy" id="190485"/>
    <lineage>
        <taxon>Bacteria</taxon>
        <taxon>Pseudomonadati</taxon>
        <taxon>Pseudomonadota</taxon>
        <taxon>Gammaproteobacteria</taxon>
        <taxon>Lysobacterales</taxon>
        <taxon>Lysobacteraceae</taxon>
        <taxon>Xanthomonas</taxon>
    </lineage>
</organism>
<accession>Q8P4H1</accession>
<keyword id="KW-0963">Cytoplasm</keyword>
<keyword id="KW-0378">Hydrolase</keyword>
<keyword id="KW-1185">Reference proteome</keyword>
<keyword id="KW-0694">RNA-binding</keyword>
<keyword id="KW-0820">tRNA-binding</keyword>
<feature type="chain" id="PRO_0000164621" description="D-aminoacyl-tRNA deacylase">
    <location>
        <begin position="1"/>
        <end position="146"/>
    </location>
</feature>
<feature type="short sequence motif" description="Gly-cisPro motif, important for rejection of L-amino acids" evidence="1">
    <location>
        <begin position="138"/>
        <end position="139"/>
    </location>
</feature>
<name>DTD_XANCP</name>
<dbReference type="EC" id="3.1.1.96" evidence="1"/>
<dbReference type="EMBL" id="AE008922">
    <property type="protein sequence ID" value="AAM42994.1"/>
    <property type="status" value="ALT_INIT"/>
    <property type="molecule type" value="Genomic_DNA"/>
</dbReference>
<dbReference type="RefSeq" id="NP_639082.2">
    <property type="nucleotide sequence ID" value="NC_003902.1"/>
</dbReference>
<dbReference type="RefSeq" id="WP_011038819.1">
    <property type="nucleotide sequence ID" value="NC_003902.1"/>
</dbReference>
<dbReference type="SMR" id="Q8P4H1"/>
<dbReference type="STRING" id="190485.XCC3737"/>
<dbReference type="EnsemblBacteria" id="AAM42994">
    <property type="protein sequence ID" value="AAM42994"/>
    <property type="gene ID" value="XCC3737"/>
</dbReference>
<dbReference type="KEGG" id="xcc:XCC3737"/>
<dbReference type="PATRIC" id="fig|190485.4.peg.3998"/>
<dbReference type="eggNOG" id="COG1490">
    <property type="taxonomic scope" value="Bacteria"/>
</dbReference>
<dbReference type="HOGENOM" id="CLU_076901_1_1_6"/>
<dbReference type="OrthoDB" id="9801395at2"/>
<dbReference type="Proteomes" id="UP000001010">
    <property type="component" value="Chromosome"/>
</dbReference>
<dbReference type="GO" id="GO:0005737">
    <property type="term" value="C:cytoplasm"/>
    <property type="evidence" value="ECO:0000318"/>
    <property type="project" value="GO_Central"/>
</dbReference>
<dbReference type="GO" id="GO:0051500">
    <property type="term" value="F:D-tyrosyl-tRNA(Tyr) deacylase activity"/>
    <property type="evidence" value="ECO:0000318"/>
    <property type="project" value="GO_Central"/>
</dbReference>
<dbReference type="GO" id="GO:0106026">
    <property type="term" value="F:Gly-tRNA(Ala) deacylase activity"/>
    <property type="evidence" value="ECO:0007669"/>
    <property type="project" value="UniProtKB-UniRule"/>
</dbReference>
<dbReference type="GO" id="GO:0043908">
    <property type="term" value="F:Ser(Gly)-tRNA(Ala) hydrolase activity"/>
    <property type="evidence" value="ECO:0007669"/>
    <property type="project" value="UniProtKB-UniRule"/>
</dbReference>
<dbReference type="GO" id="GO:0000049">
    <property type="term" value="F:tRNA binding"/>
    <property type="evidence" value="ECO:0007669"/>
    <property type="project" value="UniProtKB-UniRule"/>
</dbReference>
<dbReference type="GO" id="GO:0019478">
    <property type="term" value="P:D-amino acid catabolic process"/>
    <property type="evidence" value="ECO:0007669"/>
    <property type="project" value="UniProtKB-UniRule"/>
</dbReference>
<dbReference type="GO" id="GO:0006399">
    <property type="term" value="P:tRNA metabolic process"/>
    <property type="evidence" value="ECO:0000318"/>
    <property type="project" value="GO_Central"/>
</dbReference>
<dbReference type="CDD" id="cd00563">
    <property type="entry name" value="Dtyr_deacylase"/>
    <property type="match status" value="1"/>
</dbReference>
<dbReference type="FunFam" id="3.50.80.10:FF:000001">
    <property type="entry name" value="D-aminoacyl-tRNA deacylase"/>
    <property type="match status" value="1"/>
</dbReference>
<dbReference type="Gene3D" id="3.50.80.10">
    <property type="entry name" value="D-tyrosyl-tRNA(Tyr) deacylase"/>
    <property type="match status" value="1"/>
</dbReference>
<dbReference type="HAMAP" id="MF_00518">
    <property type="entry name" value="Deacylase_Dtd"/>
    <property type="match status" value="1"/>
</dbReference>
<dbReference type="InterPro" id="IPR003732">
    <property type="entry name" value="Daa-tRNA_deacyls_DTD"/>
</dbReference>
<dbReference type="InterPro" id="IPR023509">
    <property type="entry name" value="DTD-like_sf"/>
</dbReference>
<dbReference type="NCBIfam" id="TIGR00256">
    <property type="entry name" value="D-aminoacyl-tRNA deacylase"/>
    <property type="match status" value="1"/>
</dbReference>
<dbReference type="PANTHER" id="PTHR10472:SF5">
    <property type="entry name" value="D-AMINOACYL-TRNA DEACYLASE 1"/>
    <property type="match status" value="1"/>
</dbReference>
<dbReference type="PANTHER" id="PTHR10472">
    <property type="entry name" value="D-TYROSYL-TRNA TYR DEACYLASE"/>
    <property type="match status" value="1"/>
</dbReference>
<dbReference type="Pfam" id="PF02580">
    <property type="entry name" value="Tyr_Deacylase"/>
    <property type="match status" value="1"/>
</dbReference>
<dbReference type="SUPFAM" id="SSF69500">
    <property type="entry name" value="DTD-like"/>
    <property type="match status" value="1"/>
</dbReference>
<comment type="function">
    <text evidence="1">An aminoacyl-tRNA editing enzyme that deacylates mischarged D-aminoacyl-tRNAs. Also deacylates mischarged glycyl-tRNA(Ala), protecting cells against glycine mischarging by AlaRS. Acts via tRNA-based rather than protein-based catalysis; rejects L-amino acids rather than detecting D-amino acids in the active site. By recycling D-aminoacyl-tRNA to D-amino acids and free tRNA molecules, this enzyme counteracts the toxicity associated with the formation of D-aminoacyl-tRNA entities in vivo and helps enforce protein L-homochirality.</text>
</comment>
<comment type="catalytic activity">
    <reaction evidence="1">
        <text>glycyl-tRNA(Ala) + H2O = tRNA(Ala) + glycine + H(+)</text>
        <dbReference type="Rhea" id="RHEA:53744"/>
        <dbReference type="Rhea" id="RHEA-COMP:9657"/>
        <dbReference type="Rhea" id="RHEA-COMP:13640"/>
        <dbReference type="ChEBI" id="CHEBI:15377"/>
        <dbReference type="ChEBI" id="CHEBI:15378"/>
        <dbReference type="ChEBI" id="CHEBI:57305"/>
        <dbReference type="ChEBI" id="CHEBI:78442"/>
        <dbReference type="ChEBI" id="CHEBI:78522"/>
        <dbReference type="EC" id="3.1.1.96"/>
    </reaction>
</comment>
<comment type="catalytic activity">
    <reaction evidence="1">
        <text>a D-aminoacyl-tRNA + H2O = a tRNA + a D-alpha-amino acid + H(+)</text>
        <dbReference type="Rhea" id="RHEA:13953"/>
        <dbReference type="Rhea" id="RHEA-COMP:10123"/>
        <dbReference type="Rhea" id="RHEA-COMP:10124"/>
        <dbReference type="ChEBI" id="CHEBI:15377"/>
        <dbReference type="ChEBI" id="CHEBI:15378"/>
        <dbReference type="ChEBI" id="CHEBI:59871"/>
        <dbReference type="ChEBI" id="CHEBI:78442"/>
        <dbReference type="ChEBI" id="CHEBI:79333"/>
        <dbReference type="EC" id="3.1.1.96"/>
    </reaction>
</comment>
<comment type="subunit">
    <text evidence="1">Homodimer.</text>
</comment>
<comment type="subcellular location">
    <subcellularLocation>
        <location evidence="1">Cytoplasm</location>
    </subcellularLocation>
</comment>
<comment type="domain">
    <text evidence="1">A Gly-cisPro motif from one monomer fits into the active site of the other monomer to allow specific chiral rejection of L-amino acids.</text>
</comment>
<comment type="similarity">
    <text evidence="1">Belongs to the DTD family.</text>
</comment>
<comment type="sequence caution" evidence="2">
    <conflict type="erroneous initiation">
        <sequence resource="EMBL-CDS" id="AAM42994"/>
    </conflict>
    <text>Extended N-terminus.</text>
</comment>
<gene>
    <name evidence="1" type="primary">dtd</name>
    <name type="ordered locus">XCC3737</name>
</gene>
<proteinExistence type="inferred from homology"/>
<protein>
    <recommendedName>
        <fullName evidence="1">D-aminoacyl-tRNA deacylase</fullName>
        <shortName evidence="1">DTD</shortName>
        <ecNumber evidence="1">3.1.1.96</ecNumber>
    </recommendedName>
    <alternativeName>
        <fullName evidence="1">Gly-tRNA(Ala) deacylase</fullName>
    </alternativeName>
</protein>